<keyword id="KW-0067">ATP-binding</keyword>
<keyword id="KW-0436">Ligase</keyword>
<keyword id="KW-0460">Magnesium</keyword>
<keyword id="KW-0464">Manganese</keyword>
<keyword id="KW-0479">Metal-binding</keyword>
<keyword id="KW-0547">Nucleotide-binding</keyword>
<keyword id="KW-0658">Purine biosynthesis</keyword>
<keyword id="KW-1185">Reference proteome</keyword>
<organism>
    <name type="scientific">Leptospira interrogans serogroup Icterohaemorrhagiae serovar Lai (strain 56601)</name>
    <dbReference type="NCBI Taxonomy" id="189518"/>
    <lineage>
        <taxon>Bacteria</taxon>
        <taxon>Pseudomonadati</taxon>
        <taxon>Spirochaetota</taxon>
        <taxon>Spirochaetia</taxon>
        <taxon>Leptospirales</taxon>
        <taxon>Leptospiraceae</taxon>
        <taxon>Leptospira</taxon>
    </lineage>
</organism>
<accession>Q8EZT7</accession>
<comment type="catalytic activity">
    <reaction evidence="2">
        <text>5-phospho-beta-D-ribosylamine + glycine + ATP = N(1)-(5-phospho-beta-D-ribosyl)glycinamide + ADP + phosphate + H(+)</text>
        <dbReference type="Rhea" id="RHEA:17453"/>
        <dbReference type="ChEBI" id="CHEBI:15378"/>
        <dbReference type="ChEBI" id="CHEBI:30616"/>
        <dbReference type="ChEBI" id="CHEBI:43474"/>
        <dbReference type="ChEBI" id="CHEBI:57305"/>
        <dbReference type="ChEBI" id="CHEBI:58681"/>
        <dbReference type="ChEBI" id="CHEBI:143788"/>
        <dbReference type="ChEBI" id="CHEBI:456216"/>
        <dbReference type="EC" id="6.3.4.13"/>
    </reaction>
</comment>
<comment type="cofactor">
    <cofactor evidence="1">
        <name>Mg(2+)</name>
        <dbReference type="ChEBI" id="CHEBI:18420"/>
    </cofactor>
    <cofactor evidence="1">
        <name>Mn(2+)</name>
        <dbReference type="ChEBI" id="CHEBI:29035"/>
    </cofactor>
    <text evidence="1">Binds 1 Mg(2+) or Mn(2+) ion per subunit.</text>
</comment>
<comment type="pathway">
    <text evidence="2">Purine metabolism; IMP biosynthesis via de novo pathway; N(1)-(5-phospho-D-ribosyl)glycinamide from 5-phospho-alpha-D-ribose 1-diphosphate: step 2/2.</text>
</comment>
<comment type="similarity">
    <text evidence="2">Belongs to the GARS family.</text>
</comment>
<comment type="sequence caution" evidence="3">
    <conflict type="erroneous initiation">
        <sequence resource="EMBL-CDS" id="AAN50962"/>
    </conflict>
    <text>Truncated N-terminus.</text>
</comment>
<gene>
    <name evidence="2" type="primary">purD</name>
    <name type="ordered locus">LA_3764</name>
</gene>
<proteinExistence type="inferred from homology"/>
<feature type="chain" id="PRO_0000151459" description="Phosphoribosylamine--glycine ligase">
    <location>
        <begin position="1"/>
        <end position="426"/>
    </location>
</feature>
<feature type="domain" description="ATP-grasp" evidence="2">
    <location>
        <begin position="113"/>
        <end position="320"/>
    </location>
</feature>
<feature type="binding site" evidence="2">
    <location>
        <begin position="139"/>
        <end position="200"/>
    </location>
    <ligand>
        <name>ATP</name>
        <dbReference type="ChEBI" id="CHEBI:30616"/>
    </ligand>
</feature>
<feature type="binding site" evidence="2">
    <location>
        <position position="290"/>
    </location>
    <ligand>
        <name>Mg(2+)</name>
        <dbReference type="ChEBI" id="CHEBI:18420"/>
    </ligand>
</feature>
<feature type="binding site" evidence="2">
    <location>
        <position position="292"/>
    </location>
    <ligand>
        <name>Mg(2+)</name>
        <dbReference type="ChEBI" id="CHEBI:18420"/>
    </ligand>
</feature>
<evidence type="ECO:0000250" key="1"/>
<evidence type="ECO:0000255" key="2">
    <source>
        <dbReference type="HAMAP-Rule" id="MF_00138"/>
    </source>
</evidence>
<evidence type="ECO:0000305" key="3"/>
<sequence length="426" mass="46244">MQVKLKVLLIGSGGRESAIAFYLRKSVLLSELKVFPGNGGFPDQELLPPDSFQVLDKNSVQSFLKQNPFDLIVVGPEDPLVAGFADWAAELNIPVFGPDSFCAQVEGSKDFAKSLMTEAKIPTAEYKTFSEYSDSLKYLESKSIPIVIKADGLAAGKGVTVATSKEMAQTALKEIFKDKKFGSSGNQVVIEEFMEGQEASIFAISDGDSYFLLPAAQDHKRAFDGDQGPNTGGMGAYCPAPVISESILQKVKEQIFDPMFDLFRKKGHPYRGLLYAGLMISPNGEPKVVEFNCRFGDPETQCVLAMLDGDLLELLYRASTGKIKGVQAAVKKGAAVVVVLAAQGYPDFYEKNIPLNLPETSGQNVHLFHAGTLKKDGKVFSSGGRILGIVAQGADLKSSVDQAYSFLEKIQAPKTFYRKDIGYRAL</sequence>
<dbReference type="EC" id="6.3.4.13" evidence="2"/>
<dbReference type="EMBL" id="AE010300">
    <property type="protein sequence ID" value="AAN50962.2"/>
    <property type="status" value="ALT_INIT"/>
    <property type="molecule type" value="Genomic_DNA"/>
</dbReference>
<dbReference type="RefSeq" id="NP_713944.2">
    <property type="nucleotide sequence ID" value="NC_004342.2"/>
</dbReference>
<dbReference type="RefSeq" id="WP_001197375.1">
    <property type="nucleotide sequence ID" value="NC_004342.2"/>
</dbReference>
<dbReference type="SMR" id="Q8EZT7"/>
<dbReference type="FunCoup" id="Q8EZT7">
    <property type="interactions" value="333"/>
</dbReference>
<dbReference type="STRING" id="189518.LA_3764"/>
<dbReference type="PaxDb" id="189518-LA_3764"/>
<dbReference type="EnsemblBacteria" id="AAN50962">
    <property type="protein sequence ID" value="AAN50962"/>
    <property type="gene ID" value="LA_3764"/>
</dbReference>
<dbReference type="KEGG" id="lil:LA_3764"/>
<dbReference type="PATRIC" id="fig|189518.3.peg.3737"/>
<dbReference type="HOGENOM" id="CLU_027420_3_1_12"/>
<dbReference type="InParanoid" id="Q8EZT7"/>
<dbReference type="OrthoDB" id="9807240at2"/>
<dbReference type="UniPathway" id="UPA00074">
    <property type="reaction ID" value="UER00125"/>
</dbReference>
<dbReference type="Proteomes" id="UP000001408">
    <property type="component" value="Chromosome I"/>
</dbReference>
<dbReference type="GO" id="GO:0005524">
    <property type="term" value="F:ATP binding"/>
    <property type="evidence" value="ECO:0007669"/>
    <property type="project" value="UniProtKB-KW"/>
</dbReference>
<dbReference type="GO" id="GO:0046872">
    <property type="term" value="F:metal ion binding"/>
    <property type="evidence" value="ECO:0007669"/>
    <property type="project" value="UniProtKB-KW"/>
</dbReference>
<dbReference type="GO" id="GO:0004637">
    <property type="term" value="F:phosphoribosylamine-glycine ligase activity"/>
    <property type="evidence" value="ECO:0007669"/>
    <property type="project" value="UniProtKB-UniRule"/>
</dbReference>
<dbReference type="GO" id="GO:0006189">
    <property type="term" value="P:'de novo' IMP biosynthetic process"/>
    <property type="evidence" value="ECO:0007669"/>
    <property type="project" value="UniProtKB-UniRule"/>
</dbReference>
<dbReference type="GO" id="GO:0009113">
    <property type="term" value="P:purine nucleobase biosynthetic process"/>
    <property type="evidence" value="ECO:0007669"/>
    <property type="project" value="InterPro"/>
</dbReference>
<dbReference type="FunFam" id="3.30.1490.20:FF:000006">
    <property type="entry name" value="phosphoribosylamine--glycine ligase, chloroplastic-like"/>
    <property type="match status" value="1"/>
</dbReference>
<dbReference type="FunFam" id="3.30.470.20:FF:000018">
    <property type="entry name" value="Trifunctional purine biosynthetic protein adenosine-3"/>
    <property type="match status" value="1"/>
</dbReference>
<dbReference type="Gene3D" id="3.40.50.20">
    <property type="match status" value="1"/>
</dbReference>
<dbReference type="Gene3D" id="3.30.1490.20">
    <property type="entry name" value="ATP-grasp fold, A domain"/>
    <property type="match status" value="1"/>
</dbReference>
<dbReference type="Gene3D" id="3.30.470.20">
    <property type="entry name" value="ATP-grasp fold, B domain"/>
    <property type="match status" value="1"/>
</dbReference>
<dbReference type="Gene3D" id="3.90.600.10">
    <property type="entry name" value="Phosphoribosylglycinamide synthetase, C-terminal domain"/>
    <property type="match status" value="1"/>
</dbReference>
<dbReference type="HAMAP" id="MF_00138">
    <property type="entry name" value="GARS"/>
    <property type="match status" value="1"/>
</dbReference>
<dbReference type="InterPro" id="IPR011761">
    <property type="entry name" value="ATP-grasp"/>
</dbReference>
<dbReference type="InterPro" id="IPR013815">
    <property type="entry name" value="ATP_grasp_subdomain_1"/>
</dbReference>
<dbReference type="InterPro" id="IPR016185">
    <property type="entry name" value="PreATP-grasp_dom_sf"/>
</dbReference>
<dbReference type="InterPro" id="IPR020561">
    <property type="entry name" value="PRibGlycinamid_synth_ATP-grasp"/>
</dbReference>
<dbReference type="InterPro" id="IPR000115">
    <property type="entry name" value="PRibGlycinamide_synth"/>
</dbReference>
<dbReference type="InterPro" id="IPR020560">
    <property type="entry name" value="PRibGlycinamide_synth_C-dom"/>
</dbReference>
<dbReference type="InterPro" id="IPR037123">
    <property type="entry name" value="PRibGlycinamide_synth_C_sf"/>
</dbReference>
<dbReference type="InterPro" id="IPR020559">
    <property type="entry name" value="PRibGlycinamide_synth_CS"/>
</dbReference>
<dbReference type="InterPro" id="IPR020562">
    <property type="entry name" value="PRibGlycinamide_synth_N"/>
</dbReference>
<dbReference type="InterPro" id="IPR011054">
    <property type="entry name" value="Rudment_hybrid_motif"/>
</dbReference>
<dbReference type="NCBIfam" id="TIGR00877">
    <property type="entry name" value="purD"/>
    <property type="match status" value="1"/>
</dbReference>
<dbReference type="PANTHER" id="PTHR43472">
    <property type="entry name" value="PHOSPHORIBOSYLAMINE--GLYCINE LIGASE"/>
    <property type="match status" value="1"/>
</dbReference>
<dbReference type="PANTHER" id="PTHR43472:SF1">
    <property type="entry name" value="PHOSPHORIBOSYLAMINE--GLYCINE LIGASE, CHLOROPLASTIC"/>
    <property type="match status" value="1"/>
</dbReference>
<dbReference type="Pfam" id="PF01071">
    <property type="entry name" value="GARS_A"/>
    <property type="match status" value="1"/>
</dbReference>
<dbReference type="Pfam" id="PF02843">
    <property type="entry name" value="GARS_C"/>
    <property type="match status" value="1"/>
</dbReference>
<dbReference type="Pfam" id="PF02844">
    <property type="entry name" value="GARS_N"/>
    <property type="match status" value="1"/>
</dbReference>
<dbReference type="SMART" id="SM01209">
    <property type="entry name" value="GARS_A"/>
    <property type="match status" value="1"/>
</dbReference>
<dbReference type="SMART" id="SM01210">
    <property type="entry name" value="GARS_C"/>
    <property type="match status" value="1"/>
</dbReference>
<dbReference type="SUPFAM" id="SSF56059">
    <property type="entry name" value="Glutathione synthetase ATP-binding domain-like"/>
    <property type="match status" value="1"/>
</dbReference>
<dbReference type="SUPFAM" id="SSF52440">
    <property type="entry name" value="PreATP-grasp domain"/>
    <property type="match status" value="1"/>
</dbReference>
<dbReference type="SUPFAM" id="SSF51246">
    <property type="entry name" value="Rudiment single hybrid motif"/>
    <property type="match status" value="1"/>
</dbReference>
<dbReference type="PROSITE" id="PS50975">
    <property type="entry name" value="ATP_GRASP"/>
    <property type="match status" value="1"/>
</dbReference>
<dbReference type="PROSITE" id="PS00184">
    <property type="entry name" value="GARS"/>
    <property type="match status" value="1"/>
</dbReference>
<name>PUR2_LEPIN</name>
<reference key="1">
    <citation type="journal article" date="2003" name="Nature">
        <title>Unique physiological and pathogenic features of Leptospira interrogans revealed by whole-genome sequencing.</title>
        <authorList>
            <person name="Ren S.-X."/>
            <person name="Fu G."/>
            <person name="Jiang X.-G."/>
            <person name="Zeng R."/>
            <person name="Miao Y.-G."/>
            <person name="Xu H."/>
            <person name="Zhang Y.-X."/>
            <person name="Xiong H."/>
            <person name="Lu G."/>
            <person name="Lu L.-F."/>
            <person name="Jiang H.-Q."/>
            <person name="Jia J."/>
            <person name="Tu Y.-F."/>
            <person name="Jiang J.-X."/>
            <person name="Gu W.-Y."/>
            <person name="Zhang Y.-Q."/>
            <person name="Cai Z."/>
            <person name="Sheng H.-H."/>
            <person name="Yin H.-F."/>
            <person name="Zhang Y."/>
            <person name="Zhu G.-F."/>
            <person name="Wan M."/>
            <person name="Huang H.-L."/>
            <person name="Qian Z."/>
            <person name="Wang S.-Y."/>
            <person name="Ma W."/>
            <person name="Yao Z.-J."/>
            <person name="Shen Y."/>
            <person name="Qiang B.-Q."/>
            <person name="Xia Q.-C."/>
            <person name="Guo X.-K."/>
            <person name="Danchin A."/>
            <person name="Saint Girons I."/>
            <person name="Somerville R.L."/>
            <person name="Wen Y.-M."/>
            <person name="Shi M.-H."/>
            <person name="Chen Z."/>
            <person name="Xu J.-G."/>
            <person name="Zhao G.-P."/>
        </authorList>
    </citation>
    <scope>NUCLEOTIDE SEQUENCE [LARGE SCALE GENOMIC DNA]</scope>
    <source>
        <strain>56601</strain>
    </source>
</reference>
<protein>
    <recommendedName>
        <fullName evidence="2">Phosphoribosylamine--glycine ligase</fullName>
        <ecNumber evidence="2">6.3.4.13</ecNumber>
    </recommendedName>
    <alternativeName>
        <fullName evidence="2">GARS</fullName>
    </alternativeName>
    <alternativeName>
        <fullName evidence="2">Glycinamide ribonucleotide synthetase</fullName>
    </alternativeName>
    <alternativeName>
        <fullName evidence="2">Phosphoribosylglycinamide synthetase</fullName>
    </alternativeName>
</protein>